<comment type="function">
    <text evidence="2 17">Postsynaptic scaffolding protein that plays a critical role in synaptogenesis and synaptic plasticity by providing a platform for the postsynaptic clustering of crucial synaptic proteins. Interacts with the cytoplasmic tail of NMDA receptor subunits and shaker-type potassium channels. Required for synaptic plasticity associated with NMDA receptor signaling. Overexpression or depletion of DLG4 changes the ratio of excitatory to inhibitory synapses in hippocampal neurons. May reduce the amplitude of ASIC3 acid-evoked currents by retaining the channel intracellularly. May regulate the intracellular trafficking of ADR1B. Also regulates AMPA-type glutamate receptor (AMPAR) immobilization at postsynaptic density keeping the channels in an activated state in the presence of glutamate and preventing synaptic depression (By similarity). Under basal conditions, cooperates with FYN to stabilize palmitoyltransferase ZDHHC5 at the synaptic membrane through FYN-mediated phosphorylation of ZDHHC5 and its subsequent inhibition of association with endocytic proteins (PubMed:26334723).</text>
</comment>
<comment type="subunit">
    <text evidence="1 2 7 8 9 10 11 12 13 14 15 16 17 19 22 23">Interacts through its PDZ domains with ANO2 and NETO1 (By similarity). Interacts through its first two PDZ domains with GRIN2A, GRIN2B, GRIN2C, GRIN2D (By similarity). Interacts with ASIC3 (By similarity). Interacts with SEMA4C (By similarity). Interacts with CXADR (By similarity). Interacts with KCND2 (By similarity). Interacts with SYNGAP1 (By similarity). Interacts with LRRC4 and LRRC4B (By similarity). Interacts with ERBB4 (PubMed:10725395). Interacts with KCNA1, KCNA2, KCNA3 and KCNA4 (PubMed:7477295). Interacts through its first PDZ domain with GRIK2, KCNA4 and CRIPT (PubMed:11744724). Interacts through its second PDZ domain with the PDZ domain of NOS1 or the C-terminus of CAPON (By similarity). Interacts through its third PDZ domain with NLGN1 and CRIPT, and probably with NLGN2 and NLGN3 (PubMed:9278515). Interacts through its guanylate kinase-like domain with KIF13B (PubMed:10859302). Interacts through its guanylate kinase-like domain with DLGAP1/GKAP, DLGAP2, DLGAP3, DLGAP4, MAP1A, BEGAIN and SIPA1L1 (By similarity). Isoform 2 interacts through an L27 domain with HGS/HRS and the first L27 domain of CASK (PubMed:12151521). Interacts with ADR1B and ANKS1B (By similarity). May interact with HTR2A (By similarity). Interacts with ADAM22 (PubMed:27066583). Interacts with KLHL17 and LGI1 (By similarity). Interacts with FRMPD4 (via C-terminus) (PubMed:19118189). Interacts with LRFN1, LRFN2 and LRFN4 (PubMed:16630835). Interacts (via N-terminal tandem pair of PDZ domains) with GPER1 (via C-terminus tail motif); the interaction is direct and induces the increase of GPER1 protein levels residing at the plasma membrane surface in a estradiol-independent manner (By similarity). Interacts (via N-terminus tandem pair of PDZ domains) with NOS1 (via N-terminal domain) (By similarity). Interacts with SHANK3 (By similarity). Interacts with KCNJ4 (By similarity). Interacts with GPR85 (PubMed:25780553). Interacts with CACNG2 and MPP2 (via the SH3-Guanylate kinase-like sub-module) (By similarity). Interacts with ADGRB1 (PubMed:23782696). Found in a complex with PRR7 and GRIN1 (By similarity). Interacts (via PDZ3 domain and to lesser degree via PDZ2 domain) with PRR7 (By similarity). Component of the postsynaptic hippocampal AMPA-type glutamate receptor (AMPAR) complex, at least composed of pore forming AMPAR subunits GRIA1, GRIA2 and GRIA3 and AMPAR auxiliary proteins SHISA6 and SHISA7. Interacts (via its first two PDZ domains) with SHISA6 and SHISA7 (via PDZ-binding motif); the interaction is direct (By similarity). Interacts with RPH3A and GRIN2A; this ternary complex regulates NMDA receptor composition at postsynaptic membranes (By similarity). Interacts with ABR and BCR (PubMed:20962234). Interacts with DGKI (via PDZ-binding motif); controls the localization of DGKI to the synapse (PubMed:21119615). Interacts with C9orf72, SMCR8 and RAB39B (By similarity). Interacts with ZDHHC5 (PubMed:26334723). Interacts with PTEN (via PDZ domain-binding motif); the interaction is induced by NMDA and is required for PTEN location at postsynaptic density (By similarity). Found in a complex with GRIA1, GRIA2, GRIA3, GRIA4, CACNG8 and CNIH2 (By similarity). Interacts with FAM81A; the interaction facilitates condensate formation via liquid-liquid phase separation (By similarity). Interacts with ADGRL3 (By similarity). Interacts with SORCS3 (By similarity).</text>
</comment>
<comment type="interaction">
    <interactant intactId="EBI-80389">
        <id>P78352</id>
    </interactant>
    <interactant intactId="EBI-946968">
        <id>Q9P021</id>
        <label>CRIPT</label>
    </interactant>
    <organismsDiffer>false</organismsDiffer>
    <experiments>5</experiments>
</comment>
<comment type="interaction">
    <interactant intactId="EBI-80389">
        <id>P78352</id>
    </interactant>
    <interactant intactId="EBI-1753207">
        <id>O14490</id>
        <label>DLGAP1</label>
    </interactant>
    <organismsDiffer>false</organismsDiffer>
    <experiments>6</experiments>
</comment>
<comment type="interaction">
    <interactant intactId="EBI-80389">
        <id>P78352</id>
    </interactant>
    <interactant intactId="EBI-80371">
        <id>Q15303</id>
        <label>ERBB4</label>
    </interactant>
    <organismsDiffer>false</organismsDiffer>
    <experiments>6</experiments>
</comment>
<comment type="interaction">
    <interactant intactId="EBI-80389">
        <id>P78352</id>
    </interactant>
    <interactant intactId="EBI-7249937">
        <id>Q12879</id>
        <label>GRIN2A</label>
    </interactant>
    <organismsDiffer>false</organismsDiffer>
    <experiments>6</experiments>
</comment>
<comment type="interaction">
    <interactant intactId="EBI-80389">
        <id>P78352</id>
    </interactant>
    <interactant intactId="EBI-2256942">
        <id>Q13224</id>
        <label>GRIN2B</label>
    </interactant>
    <organismsDiffer>false</organismsDiffer>
    <experiments>4</experiments>
</comment>
<comment type="interaction">
    <interactant intactId="EBI-80389">
        <id>P78352</id>
    </interactant>
    <interactant intactId="EBI-8285963">
        <id>Q14957</id>
        <label>GRIN2C</label>
    </interactant>
    <organismsDiffer>false</organismsDiffer>
    <experiments>4</experiments>
</comment>
<comment type="interaction">
    <interactant intactId="EBI-80389">
        <id>P78352</id>
    </interactant>
    <interactant intactId="EBI-8286599">
        <id>Q09470</id>
        <label>KCNA1</label>
    </interactant>
    <organismsDiffer>false</organismsDiffer>
    <experiments>2</experiments>
</comment>
<comment type="interaction">
    <interactant intactId="EBI-80389">
        <id>P78352</id>
    </interactant>
    <interactant intactId="EBI-631235">
        <id>P22459</id>
        <label>KCNA4</label>
    </interactant>
    <organismsDiffer>false</organismsDiffer>
    <experiments>2</experiments>
</comment>
<comment type="interaction">
    <interactant intactId="EBI-80389">
        <id>P78352</id>
    </interactant>
    <interactant intactId="EBI-465669">
        <id>O60333-3</id>
        <label>KIF1B</label>
    </interactant>
    <organismsDiffer>false</organismsDiffer>
    <experiments>4</experiments>
</comment>
<comment type="interaction">
    <interactant intactId="EBI-80389">
        <id>P78352</id>
    </interactant>
    <interactant intactId="EBI-1046087">
        <id>Q07954</id>
        <label>LRP1</label>
    </interactant>
    <organismsDiffer>false</organismsDiffer>
    <experiments>2</experiments>
</comment>
<comment type="interaction">
    <interactant intactId="EBI-80389">
        <id>P78352</id>
    </interactant>
    <interactant intactId="EBI-389668">
        <id>Q00987</id>
        <label>MDM2</label>
    </interactant>
    <organismsDiffer>false</organismsDiffer>
    <experiments>3</experiments>
</comment>
<comment type="interaction">
    <interactant intactId="EBI-80389">
        <id>P78352</id>
    </interactant>
    <interactant intactId="EBI-749285">
        <id>Q15311</id>
        <label>RALBP1</label>
    </interactant>
    <organismsDiffer>false</organismsDiffer>
    <experiments>2</experiments>
</comment>
<comment type="interaction">
    <interactant intactId="EBI-80389">
        <id>P78352</id>
    </interactant>
    <interactant intactId="EBI-310678">
        <id>O43166</id>
        <label>SIPA1L1</label>
    </interactant>
    <organismsDiffer>false</organismsDiffer>
    <experiments>2</experiments>
</comment>
<comment type="interaction">
    <interactant intactId="EBI-80389">
        <id>P78352</id>
    </interactant>
    <interactant intactId="EBI-6269434">
        <id>P97836-5</id>
        <label>Dlgap1</label>
    </interactant>
    <organismsDiffer>true</organismsDiffer>
    <experiments>3</experiments>
</comment>
<comment type="interaction">
    <interactant intactId="EBI-80389">
        <id>P78352</id>
    </interactant>
    <interactant intactId="EBI-7575403">
        <id>Q8VDU0</id>
        <label>Gpsm2</label>
    </interactant>
    <organismsDiffer>true</organismsDiffer>
    <experiments>7</experiments>
</comment>
<comment type="interaction">
    <interactant intactId="EBI-80389">
        <id>P78352</id>
    </interactant>
    <interactant intactId="EBI-631463">
        <id>P10499</id>
        <label>Kcna1</label>
    </interactant>
    <organismsDiffer>true</organismsDiffer>
    <experiments>2</experiments>
</comment>
<comment type="interaction">
    <interactant intactId="EBI-80389">
        <id>P78352</id>
    </interactant>
    <interactant intactId="EBI-631446">
        <id>P63142</id>
        <label>Kcna2</label>
    </interactant>
    <organismsDiffer>true</organismsDiffer>
    <experiments>2</experiments>
</comment>
<comment type="interaction">
    <interactant intactId="EBI-80389">
        <id>P78352</id>
    </interactant>
    <interactant intactId="EBI-631478">
        <id>P15384</id>
        <label>Kcna3</label>
    </interactant>
    <organismsDiffer>true</organismsDiffer>
    <experiments>2</experiments>
</comment>
<comment type="interaction">
    <interactant intactId="EBI-80389">
        <id>P78352</id>
    </interactant>
    <interactant intactId="EBI-631417">
        <id>P15385</id>
        <label>Kcna4</label>
    </interactant>
    <organismsDiffer>true</organismsDiffer>
    <experiments>9</experiments>
</comment>
<comment type="interaction">
    <interactant intactId="EBI-80389">
        <id>P78352</id>
    </interactant>
    <interactant intactId="EBI-2314926">
        <id>Q8R4I7</id>
        <label>Neto1</label>
    </interactant>
    <organismsDiffer>true</organismsDiffer>
    <experiments>2</experiments>
</comment>
<comment type="interaction">
    <interactant intactId="EBI-631152">
        <id>P78352-2</id>
    </interactant>
    <interactant intactId="EBI-21251460">
        <id>O60260-5</id>
        <label>PRKN</label>
    </interactant>
    <organismsDiffer>false</organismsDiffer>
    <experiments>6</experiments>
</comment>
<comment type="subcellular location">
    <subcellularLocation>
        <location evidence="10">Cell membrane</location>
        <topology evidence="10">Lipid-anchor</topology>
        <orientation evidence="10">Cytoplasmic side</orientation>
    </subcellularLocation>
    <subcellularLocation>
        <location evidence="1">Postsynaptic density</location>
    </subcellularLocation>
    <subcellularLocation>
        <location evidence="10">Synapse</location>
    </subcellularLocation>
    <subcellularLocation>
        <location evidence="1">Cytoplasm</location>
    </subcellularLocation>
    <subcellularLocation>
        <location evidence="1">Cell projection</location>
        <location evidence="1">Axon</location>
    </subcellularLocation>
    <subcellularLocation>
        <location evidence="1">Cell projection</location>
        <location evidence="1">Dendritic spine</location>
    </subcellularLocation>
    <subcellularLocation>
        <location evidence="1">Cell projection</location>
        <location evidence="1">Dendrite</location>
    </subcellularLocation>
    <subcellularLocation>
        <location evidence="1">Presynapse</location>
    </subcellularLocation>
    <text evidence="1">High levels in postsynaptic density of neurons in the forebrain. Also in presynaptic region of inhibitory synapses formed by cerebellar basket cells on axon hillocks of Purkinje cells. Suppression of neuronal activity induces synaptic accumulation and clustering of DLG4.</text>
</comment>
<comment type="alternative products">
    <event type="alternative splicing"/>
    <isoform>
        <id>P78352-1</id>
        <name>1</name>
        <name>PSD95-alpha</name>
        <sequence type="displayed"/>
    </isoform>
    <isoform>
        <id>P78352-2</id>
        <name>2</name>
        <name>PSD95-beta</name>
        <sequence type="described" ref="VSP_014929"/>
    </isoform>
    <isoform>
        <id>P78352-3</id>
        <name>3</name>
        <sequence type="described" ref="VSP_047247"/>
    </isoform>
</comment>
<comment type="tissue specificity">
    <text>Brain.</text>
</comment>
<comment type="domain">
    <text>The PDZ domain 3 mediates interaction with ADR1B.</text>
</comment>
<comment type="domain">
    <text>The L27 domain near the N-terminus of isoform 2 is required for HGS/HRS-dependent targeting to postsynaptic density.</text>
</comment>
<comment type="PTM">
    <text evidence="1 18">Palmitoylated (PubMed:26701913). Palmitoylation is required for targeting to postsynaptic density, plasma membrane and synapses (By similarity). Palmitoylation by ZDHHC2 occurs when the synaptic activity decreases and induces DLG4 synaptic clustering (By similarity). Palmitoylation by ZDHHC15 regulates trafficking to the postsynaptic density and function in synaptogenesis (By similarity). Palmitoylation may play a role in glutamate receptor GRIA1 synapse clustering (By similarity). Depalmitoylated by ABHD17A and ABHD17B and to a lesser extent by ABHD17C, ABHD12, ABHD13, LYPLA1 and LYPLA2 (PubMed:26701913). Undergoes rapid synaptic palmitoylation/depalmitoylation cycles during neuronal development which slow down in mature neurons (By similarity).</text>
</comment>
<comment type="PTM">
    <text evidence="1">Ubiquitinated by MDM2 in response to NMDA receptor activation, leading to proteasome-mediated degradation of DLG4 which is required for AMPA receptor endocytosis.</text>
</comment>
<comment type="disease" evidence="20 21">
    <disease id="DI-05770">
        <name>Intellectual developmental disorder, autosomal dominant 62</name>
        <acronym>MRD62</acronym>
        <description>An autosomal dominant form of intellectual disability, a disorder characterized by significantly below average general intellectual functioning associated with impairments in adaptive behavior and manifested during the developmental period. MRD62 is characterized by mild to moderately impaired intellectual development.</description>
        <dbReference type="MIM" id="618793"/>
    </disease>
    <text>The disease is caused by variants affecting the gene represented in this entry.</text>
</comment>
<comment type="similarity">
    <text evidence="26">Belongs to the MAGUK family.</text>
</comment>
<comment type="sequence caution" evidence="26">
    <conflict type="erroneous initiation">
        <sequence resource="EMBL-CDS" id="AAB07736"/>
    </conflict>
    <text>Extended N-terminus.</text>
</comment>
<gene>
    <name evidence="27" type="primary">DLG4</name>
    <name type="synonym">PSD95</name>
</gene>
<feature type="chain" id="PRO_0000094560" description="Disks large homolog 4">
    <location>
        <begin position="1"/>
        <end position="724"/>
    </location>
</feature>
<feature type="domain" description="PDZ 1" evidence="4">
    <location>
        <begin position="65"/>
        <end position="151"/>
    </location>
</feature>
<feature type="domain" description="PDZ 2" evidence="4">
    <location>
        <begin position="160"/>
        <end position="246"/>
    </location>
</feature>
<feature type="domain" description="PDZ 3" evidence="4">
    <location>
        <begin position="313"/>
        <end position="393"/>
    </location>
</feature>
<feature type="domain" description="SH3" evidence="5">
    <location>
        <begin position="428"/>
        <end position="498"/>
    </location>
</feature>
<feature type="domain" description="Guanylate kinase-like" evidence="3">
    <location>
        <begin position="534"/>
        <end position="709"/>
    </location>
</feature>
<feature type="region of interest" description="Disordered" evidence="6">
    <location>
        <begin position="15"/>
        <end position="35"/>
    </location>
</feature>
<feature type="modified residue" description="Phosphoserine" evidence="2">
    <location>
        <position position="73"/>
    </location>
</feature>
<feature type="modified residue" description="Phosphoserine" evidence="2">
    <location>
        <position position="142"/>
    </location>
</feature>
<feature type="modified residue" description="Phosphotyrosine" evidence="2">
    <location>
        <position position="240"/>
    </location>
</feature>
<feature type="modified residue" description="Phosphoserine" evidence="1">
    <location>
        <position position="295"/>
    </location>
</feature>
<feature type="modified residue" description="Phosphoserine" evidence="2">
    <location>
        <position position="415"/>
    </location>
</feature>
<feature type="modified residue" description="Phosphoserine" evidence="2">
    <location>
        <position position="418"/>
    </location>
</feature>
<feature type="modified residue" description="Phosphothreonine" evidence="2">
    <location>
        <position position="420"/>
    </location>
</feature>
<feature type="modified residue" description="Phosphoserine" evidence="2">
    <location>
        <position position="422"/>
    </location>
</feature>
<feature type="modified residue" description="Phosphoserine" evidence="2">
    <location>
        <position position="425"/>
    </location>
</feature>
<feature type="modified residue" description="Phosphoserine" evidence="1">
    <location>
        <position position="449"/>
    </location>
</feature>
<feature type="modified residue" description="Phosphoserine" evidence="2">
    <location>
        <position position="480"/>
    </location>
</feature>
<feature type="modified residue" description="Phosphotyrosine" evidence="2">
    <location>
        <position position="580"/>
    </location>
</feature>
<feature type="modified residue" description="Phosphoserine" evidence="2">
    <location>
        <position position="606"/>
    </location>
</feature>
<feature type="modified residue" description="Phosphoserine" evidence="1">
    <location>
        <position position="654"/>
    </location>
</feature>
<feature type="modified residue" description="Phosphotyrosine" evidence="2">
    <location>
        <position position="715"/>
    </location>
</feature>
<feature type="lipid moiety-binding region" description="S-palmitoyl cysteine" evidence="1">
    <location>
        <position position="3"/>
    </location>
</feature>
<feature type="lipid moiety-binding region" description="S-palmitoyl cysteine" evidence="1">
    <location>
        <position position="5"/>
    </location>
</feature>
<feature type="splice variant" id="VSP_014929" description="In isoform 2." evidence="25">
    <original>MDCLCIVTTK</original>
    <variation>MSQRPRAPRSALWLLAPPLLRWAPPLLTVLHSDLFQALLDILDYYEASLSESQ</variation>
    <location>
        <begin position="1"/>
        <end position="10"/>
    </location>
</feature>
<feature type="splice variant" id="VSP_047247" description="In isoform 3." evidence="26">
    <location>
        <begin position="51"/>
        <end position="53"/>
    </location>
</feature>
<feature type="sequence variant" id="VAR_083773" description="In MRD62." evidence="20">
    <location>
        <begin position="309"/>
        <end position="724"/>
    </location>
</feature>
<feature type="sequence variant" id="VAR_083774" description="In MRD62." evidence="20">
    <location>
        <begin position="368"/>
        <end position="724"/>
    </location>
</feature>
<feature type="helix" evidence="29">
    <location>
        <begin position="2"/>
        <end position="15"/>
    </location>
</feature>
<feature type="strand" evidence="33">
    <location>
        <begin position="61"/>
        <end position="69"/>
    </location>
</feature>
<feature type="strand" evidence="28">
    <location>
        <begin position="72"/>
        <end position="74"/>
    </location>
</feature>
<feature type="strand" evidence="33">
    <location>
        <begin position="76"/>
        <end position="85"/>
    </location>
</feature>
<feature type="strand" evidence="28">
    <location>
        <begin position="87"/>
        <end position="90"/>
    </location>
</feature>
<feature type="strand" evidence="33">
    <location>
        <begin position="94"/>
        <end position="99"/>
    </location>
</feature>
<feature type="helix" evidence="33">
    <location>
        <begin position="104"/>
        <end position="108"/>
    </location>
</feature>
<feature type="strand" evidence="33">
    <location>
        <begin position="116"/>
        <end position="120"/>
    </location>
</feature>
<feature type="strand" evidence="28">
    <location>
        <begin position="126"/>
        <end position="128"/>
    </location>
</feature>
<feature type="helix" evidence="33">
    <location>
        <begin position="130"/>
        <end position="138"/>
    </location>
</feature>
<feature type="strand" evidence="33">
    <location>
        <begin position="142"/>
        <end position="151"/>
    </location>
</feature>
<feature type="strand" evidence="33">
    <location>
        <begin position="157"/>
        <end position="164"/>
    </location>
</feature>
<feature type="strand" evidence="33">
    <location>
        <begin position="171"/>
        <end position="176"/>
    </location>
</feature>
<feature type="strand" evidence="30">
    <location>
        <begin position="178"/>
        <end position="180"/>
    </location>
</feature>
<feature type="strand" evidence="33">
    <location>
        <begin position="189"/>
        <end position="194"/>
    </location>
</feature>
<feature type="helix" evidence="33">
    <location>
        <begin position="199"/>
        <end position="203"/>
    </location>
</feature>
<feature type="strand" evidence="33">
    <location>
        <begin position="211"/>
        <end position="215"/>
    </location>
</feature>
<feature type="helix" evidence="33">
    <location>
        <begin position="225"/>
        <end position="233"/>
    </location>
</feature>
<feature type="strand" evidence="33">
    <location>
        <begin position="237"/>
        <end position="245"/>
    </location>
</feature>
<feature type="turn" evidence="35">
    <location>
        <begin position="302"/>
        <end position="305"/>
    </location>
</feature>
<feature type="strand" evidence="34">
    <location>
        <begin position="308"/>
        <end position="310"/>
    </location>
</feature>
<feature type="strand" evidence="32">
    <location>
        <begin position="312"/>
        <end position="317"/>
    </location>
</feature>
<feature type="strand" evidence="32">
    <location>
        <begin position="324"/>
        <end position="331"/>
    </location>
</feature>
<feature type="strand" evidence="32">
    <location>
        <begin position="334"/>
        <end position="341"/>
    </location>
</feature>
<feature type="strand" evidence="31">
    <location>
        <begin position="343"/>
        <end position="345"/>
    </location>
</feature>
<feature type="helix" evidence="32">
    <location>
        <begin position="346"/>
        <end position="350"/>
    </location>
</feature>
<feature type="strand" evidence="32">
    <location>
        <begin position="357"/>
        <end position="362"/>
    </location>
</feature>
<feature type="helix" evidence="32">
    <location>
        <begin position="372"/>
        <end position="380"/>
    </location>
</feature>
<feature type="strand" evidence="32">
    <location>
        <begin position="384"/>
        <end position="392"/>
    </location>
</feature>
<feature type="helix" evidence="32">
    <location>
        <begin position="394"/>
        <end position="400"/>
    </location>
</feature>
<feature type="sequence conflict" description="In Ref. 3; AAD56173." evidence="26" ref="3">
    <original>E</original>
    <variation>V</variation>
    <location sequence="P78352-2">
        <position position="46"/>
    </location>
</feature>
<sequence>MDCLCIVTTKKYRYQDEDTPPLEHSPAHLPNQANSPPVIVNTDTLEAPGYELQVNGTEGEMEYEEITLERGNSGLGFSIAGGTDNPHIGDDPSIFITKIIPGGAAAQDGRLRVNDSILFVNEVDVREVTHSAAVEALKEAGSIVRLYVMRRKPPAEKVMEIKLIKGPKGLGFSIAGGVGNQHIPGDNSIYVTKIIEGGAAHKDGRLQIGDKILAVNSVGLEDVMHEDAVAALKNTYDVVYLKVAKPSNAYLSDSYAPPDITTSYSQHLDNEISHSSYLGTDYPTAMTPTSPRRYSPVAKDLLGEEDIPREPRRIVIHRGSTGLGFNIVGGEDGEGIFISFILAGGPADLSGELRKGDQILSVNGVDLRNASHEQAAIALKNAGQTVTIIAQYKPEEYSRFEAKIHDLREQLMNSSLGSGTASLRSNPKRGFYIRALFDYDKTKDCGFLSQALSFRFGDVLHVIDASDEEWWQARRVHSDSETDDIGFIPSKRRVERREWSRLKAKDWGSSSGSQGREDSVLSYETVTQMEVHYARPIIILGPTKDRANDDLLSEFPDKFGSCVPHTTRPKREYEIDGRDYHFVSSREKMEKDIQAHKFIEAGQYNSHLYGTSVQSVREVAEQGKHCILDVSANAVRRLQAAHLHPIAIFIRPRSLENVLEINKRITEEQARKAFDRATKLEQEFTECFSAIVEGDSFEEIYHKVKRVIEDLSGPYIWVPARERL</sequence>
<keyword id="KW-0002">3D-structure</keyword>
<keyword id="KW-0025">Alternative splicing</keyword>
<keyword id="KW-1003">Cell membrane</keyword>
<keyword id="KW-0966">Cell projection</keyword>
<keyword id="KW-0963">Cytoplasm</keyword>
<keyword id="KW-0225">Disease variant</keyword>
<keyword id="KW-0991">Intellectual disability</keyword>
<keyword id="KW-0449">Lipoprotein</keyword>
<keyword id="KW-0472">Membrane</keyword>
<keyword id="KW-0564">Palmitate</keyword>
<keyword id="KW-0597">Phosphoprotein</keyword>
<keyword id="KW-1267">Proteomics identification</keyword>
<keyword id="KW-1185">Reference proteome</keyword>
<keyword id="KW-0677">Repeat</keyword>
<keyword id="KW-0728">SH3 domain</keyword>
<keyword id="KW-0770">Synapse</keyword>
<keyword id="KW-0832">Ubl conjugation</keyword>
<name>DLG4_HUMAN</name>
<evidence type="ECO:0000250" key="1">
    <source>
        <dbReference type="UniProtKB" id="P31016"/>
    </source>
</evidence>
<evidence type="ECO:0000250" key="2">
    <source>
        <dbReference type="UniProtKB" id="Q62108"/>
    </source>
</evidence>
<evidence type="ECO:0000255" key="3">
    <source>
        <dbReference type="PROSITE-ProRule" id="PRU00100"/>
    </source>
</evidence>
<evidence type="ECO:0000255" key="4">
    <source>
        <dbReference type="PROSITE-ProRule" id="PRU00143"/>
    </source>
</evidence>
<evidence type="ECO:0000255" key="5">
    <source>
        <dbReference type="PROSITE-ProRule" id="PRU00192"/>
    </source>
</evidence>
<evidence type="ECO:0000256" key="6">
    <source>
        <dbReference type="SAM" id="MobiDB-lite"/>
    </source>
</evidence>
<evidence type="ECO:0000269" key="7">
    <source>
    </source>
</evidence>
<evidence type="ECO:0000269" key="8">
    <source>
    </source>
</evidence>
<evidence type="ECO:0000269" key="9">
    <source>
    </source>
</evidence>
<evidence type="ECO:0000269" key="10">
    <source>
    </source>
</evidence>
<evidence type="ECO:0000269" key="11">
    <source>
    </source>
</evidence>
<evidence type="ECO:0000269" key="12">
    <source>
    </source>
</evidence>
<evidence type="ECO:0000269" key="13">
    <source>
    </source>
</evidence>
<evidence type="ECO:0000269" key="14">
    <source>
    </source>
</evidence>
<evidence type="ECO:0000269" key="15">
    <source>
    </source>
</evidence>
<evidence type="ECO:0000269" key="16">
    <source>
    </source>
</evidence>
<evidence type="ECO:0000269" key="17">
    <source>
    </source>
</evidence>
<evidence type="ECO:0000269" key="18">
    <source>
    </source>
</evidence>
<evidence type="ECO:0000269" key="19">
    <source>
    </source>
</evidence>
<evidence type="ECO:0000269" key="20">
    <source>
    </source>
</evidence>
<evidence type="ECO:0000269" key="21">
    <source>
    </source>
</evidence>
<evidence type="ECO:0000269" key="22">
    <source>
    </source>
</evidence>
<evidence type="ECO:0000269" key="23">
    <source>
    </source>
</evidence>
<evidence type="ECO:0000303" key="24">
    <source>
    </source>
</evidence>
<evidence type="ECO:0000303" key="25">
    <source>
    </source>
</evidence>
<evidence type="ECO:0000305" key="26"/>
<evidence type="ECO:0000312" key="27">
    <source>
        <dbReference type="HGNC" id="HGNC:2903"/>
    </source>
</evidence>
<evidence type="ECO:0007829" key="28">
    <source>
        <dbReference type="PDB" id="1KEF"/>
    </source>
</evidence>
<evidence type="ECO:0007829" key="29">
    <source>
        <dbReference type="PDB" id="2MES"/>
    </source>
</evidence>
<evidence type="ECO:0007829" key="30">
    <source>
        <dbReference type="PDB" id="3ZRT"/>
    </source>
</evidence>
<evidence type="ECO:0007829" key="31">
    <source>
        <dbReference type="PDB" id="5JXB"/>
    </source>
</evidence>
<evidence type="ECO:0007829" key="32">
    <source>
        <dbReference type="PDB" id="6QJL"/>
    </source>
</evidence>
<evidence type="ECO:0007829" key="33">
    <source>
        <dbReference type="PDB" id="6SPV"/>
    </source>
</evidence>
<evidence type="ECO:0007829" key="34">
    <source>
        <dbReference type="PDB" id="8AH5"/>
    </source>
</evidence>
<evidence type="ECO:0007829" key="35">
    <source>
        <dbReference type="PDB" id="8AH7"/>
    </source>
</evidence>
<protein>
    <recommendedName>
        <fullName>Disks large homolog 4</fullName>
    </recommendedName>
    <alternativeName>
        <fullName evidence="26">Postsynaptic density protein 95</fullName>
        <shortName evidence="24">PSD-95</shortName>
    </alternativeName>
    <alternativeName>
        <fullName>Synapse-associated protein 90</fullName>
        <shortName>SAP-90</shortName>
        <shortName>SAP90</shortName>
    </alternativeName>
</protein>
<proteinExistence type="evidence at protein level"/>
<reference key="1">
    <citation type="journal article" date="1997" name="Genomics">
        <title>Human postsynaptic density-95 (PSD95): location of the gene (DLG4) and possible function in nonneural as well as in neural tissues.</title>
        <authorList>
            <person name="Stathakis D.G."/>
            <person name="Hoover K.B."/>
            <person name="You Z."/>
            <person name="Bryant P.J."/>
        </authorList>
    </citation>
    <scope>NUCLEOTIDE SEQUENCE [MRNA] (ISOFORM 2)</scope>
    <source>
        <tissue>Mammary gland</tissue>
    </source>
</reference>
<reference key="2">
    <citation type="submission" date="1998-07" db="EMBL/GenBank/DDBJ databases">
        <authorList>
            <person name="Stathakis D.G."/>
            <person name="Hoover K.H."/>
            <person name="You Z."/>
            <person name="Bryant P.J."/>
        </authorList>
    </citation>
    <scope>SEQUENCE REVISION</scope>
</reference>
<reference key="3">
    <citation type="journal article" date="1999" name="J. Neurochem.">
        <title>Genomic organization of human DLG4, the gene encoding postsynaptic density 95.</title>
        <authorList>
            <person name="Stathakis D.G."/>
            <person name="Udar N."/>
            <person name="Sandgren O."/>
            <person name="Andreasson S."/>
            <person name="Bryant P.J."/>
            <person name="Small K."/>
            <person name="Forsman-Semb K."/>
        </authorList>
    </citation>
    <scope>NUCLEOTIDE SEQUENCE [GENOMIC DNA]</scope>
</reference>
<reference key="4">
    <citation type="journal article" date="2004" name="Nat. Genet.">
        <title>Complete sequencing and characterization of 21,243 full-length human cDNAs.</title>
        <authorList>
            <person name="Ota T."/>
            <person name="Suzuki Y."/>
            <person name="Nishikawa T."/>
            <person name="Otsuki T."/>
            <person name="Sugiyama T."/>
            <person name="Irie R."/>
            <person name="Wakamatsu A."/>
            <person name="Hayashi K."/>
            <person name="Sato H."/>
            <person name="Nagai K."/>
            <person name="Kimura K."/>
            <person name="Makita H."/>
            <person name="Sekine M."/>
            <person name="Obayashi M."/>
            <person name="Nishi T."/>
            <person name="Shibahara T."/>
            <person name="Tanaka T."/>
            <person name="Ishii S."/>
            <person name="Yamamoto J."/>
            <person name="Saito K."/>
            <person name="Kawai Y."/>
            <person name="Isono Y."/>
            <person name="Nakamura Y."/>
            <person name="Nagahari K."/>
            <person name="Murakami K."/>
            <person name="Yasuda T."/>
            <person name="Iwayanagi T."/>
            <person name="Wagatsuma M."/>
            <person name="Shiratori A."/>
            <person name="Sudo H."/>
            <person name="Hosoiri T."/>
            <person name="Kaku Y."/>
            <person name="Kodaira H."/>
            <person name="Kondo H."/>
            <person name="Sugawara M."/>
            <person name="Takahashi M."/>
            <person name="Kanda K."/>
            <person name="Yokoi T."/>
            <person name="Furuya T."/>
            <person name="Kikkawa E."/>
            <person name="Omura Y."/>
            <person name="Abe K."/>
            <person name="Kamihara K."/>
            <person name="Katsuta N."/>
            <person name="Sato K."/>
            <person name="Tanikawa M."/>
            <person name="Yamazaki M."/>
            <person name="Ninomiya K."/>
            <person name="Ishibashi T."/>
            <person name="Yamashita H."/>
            <person name="Murakawa K."/>
            <person name="Fujimori K."/>
            <person name="Tanai H."/>
            <person name="Kimata M."/>
            <person name="Watanabe M."/>
            <person name="Hiraoka S."/>
            <person name="Chiba Y."/>
            <person name="Ishida S."/>
            <person name="Ono Y."/>
            <person name="Takiguchi S."/>
            <person name="Watanabe S."/>
            <person name="Yosida M."/>
            <person name="Hotuta T."/>
            <person name="Kusano J."/>
            <person name="Kanehori K."/>
            <person name="Takahashi-Fujii A."/>
            <person name="Hara H."/>
            <person name="Tanase T.-O."/>
            <person name="Nomura Y."/>
            <person name="Togiya S."/>
            <person name="Komai F."/>
            <person name="Hara R."/>
            <person name="Takeuchi K."/>
            <person name="Arita M."/>
            <person name="Imose N."/>
            <person name="Musashino K."/>
            <person name="Yuuki H."/>
            <person name="Oshima A."/>
            <person name="Sasaki N."/>
            <person name="Aotsuka S."/>
            <person name="Yoshikawa Y."/>
            <person name="Matsunawa H."/>
            <person name="Ichihara T."/>
            <person name="Shiohata N."/>
            <person name="Sano S."/>
            <person name="Moriya S."/>
            <person name="Momiyama H."/>
            <person name="Satoh N."/>
            <person name="Takami S."/>
            <person name="Terashima Y."/>
            <person name="Suzuki O."/>
            <person name="Nakagawa S."/>
            <person name="Senoh A."/>
            <person name="Mizoguchi H."/>
            <person name="Goto Y."/>
            <person name="Shimizu F."/>
            <person name="Wakebe H."/>
            <person name="Hishigaki H."/>
            <person name="Watanabe T."/>
            <person name="Sugiyama A."/>
            <person name="Takemoto M."/>
            <person name="Kawakami B."/>
            <person name="Yamazaki M."/>
            <person name="Watanabe K."/>
            <person name="Kumagai A."/>
            <person name="Itakura S."/>
            <person name="Fukuzumi Y."/>
            <person name="Fujimori Y."/>
            <person name="Komiyama M."/>
            <person name="Tashiro H."/>
            <person name="Tanigami A."/>
            <person name="Fujiwara T."/>
            <person name="Ono T."/>
            <person name="Yamada K."/>
            <person name="Fujii Y."/>
            <person name="Ozaki K."/>
            <person name="Hirao M."/>
            <person name="Ohmori Y."/>
            <person name="Kawabata A."/>
            <person name="Hikiji T."/>
            <person name="Kobatake N."/>
            <person name="Inagaki H."/>
            <person name="Ikema Y."/>
            <person name="Okamoto S."/>
            <person name="Okitani R."/>
            <person name="Kawakami T."/>
            <person name="Noguchi S."/>
            <person name="Itoh T."/>
            <person name="Shigeta K."/>
            <person name="Senba T."/>
            <person name="Matsumura K."/>
            <person name="Nakajima Y."/>
            <person name="Mizuno T."/>
            <person name="Morinaga M."/>
            <person name="Sasaki M."/>
            <person name="Togashi T."/>
            <person name="Oyama M."/>
            <person name="Hata H."/>
            <person name="Watanabe M."/>
            <person name="Komatsu T."/>
            <person name="Mizushima-Sugano J."/>
            <person name="Satoh T."/>
            <person name="Shirai Y."/>
            <person name="Takahashi Y."/>
            <person name="Nakagawa K."/>
            <person name="Okumura K."/>
            <person name="Nagase T."/>
            <person name="Nomura N."/>
            <person name="Kikuchi H."/>
            <person name="Masuho Y."/>
            <person name="Yamashita R."/>
            <person name="Nakai K."/>
            <person name="Yada T."/>
            <person name="Nakamura Y."/>
            <person name="Ohara O."/>
            <person name="Isogai T."/>
            <person name="Sugano S."/>
        </authorList>
    </citation>
    <scope>NUCLEOTIDE SEQUENCE [LARGE SCALE MRNA] (ISOFORM 1)</scope>
    <source>
        <tissue>Cerebellum</tissue>
    </source>
</reference>
<reference key="5">
    <citation type="journal article" date="2006" name="Nature">
        <title>DNA sequence of human chromosome 17 and analysis of rearrangement in the human lineage.</title>
        <authorList>
            <person name="Zody M.C."/>
            <person name="Garber M."/>
            <person name="Adams D.J."/>
            <person name="Sharpe T."/>
            <person name="Harrow J."/>
            <person name="Lupski J.R."/>
            <person name="Nicholson C."/>
            <person name="Searle S.M."/>
            <person name="Wilming L."/>
            <person name="Young S.K."/>
            <person name="Abouelleil A."/>
            <person name="Allen N.R."/>
            <person name="Bi W."/>
            <person name="Bloom T."/>
            <person name="Borowsky M.L."/>
            <person name="Bugalter B.E."/>
            <person name="Butler J."/>
            <person name="Chang J.L."/>
            <person name="Chen C.-K."/>
            <person name="Cook A."/>
            <person name="Corum B."/>
            <person name="Cuomo C.A."/>
            <person name="de Jong P.J."/>
            <person name="DeCaprio D."/>
            <person name="Dewar K."/>
            <person name="FitzGerald M."/>
            <person name="Gilbert J."/>
            <person name="Gibson R."/>
            <person name="Gnerre S."/>
            <person name="Goldstein S."/>
            <person name="Grafham D.V."/>
            <person name="Grocock R."/>
            <person name="Hafez N."/>
            <person name="Hagopian D.S."/>
            <person name="Hart E."/>
            <person name="Norman C.H."/>
            <person name="Humphray S."/>
            <person name="Jaffe D.B."/>
            <person name="Jones M."/>
            <person name="Kamal M."/>
            <person name="Khodiyar V.K."/>
            <person name="LaButti K."/>
            <person name="Laird G."/>
            <person name="Lehoczky J."/>
            <person name="Liu X."/>
            <person name="Lokyitsang T."/>
            <person name="Loveland J."/>
            <person name="Lui A."/>
            <person name="Macdonald P."/>
            <person name="Major J.E."/>
            <person name="Matthews L."/>
            <person name="Mauceli E."/>
            <person name="McCarroll S.A."/>
            <person name="Mihalev A.H."/>
            <person name="Mudge J."/>
            <person name="Nguyen C."/>
            <person name="Nicol R."/>
            <person name="O'Leary S.B."/>
            <person name="Osoegawa K."/>
            <person name="Schwartz D.C."/>
            <person name="Shaw-Smith C."/>
            <person name="Stankiewicz P."/>
            <person name="Steward C."/>
            <person name="Swarbreck D."/>
            <person name="Venkataraman V."/>
            <person name="Whittaker C.A."/>
            <person name="Yang X."/>
            <person name="Zimmer A.R."/>
            <person name="Bradley A."/>
            <person name="Hubbard T."/>
            <person name="Birren B.W."/>
            <person name="Rogers J."/>
            <person name="Lander E.S."/>
            <person name="Nusbaum C."/>
        </authorList>
    </citation>
    <scope>NUCLEOTIDE SEQUENCE [LARGE SCALE GENOMIC DNA]</scope>
</reference>
<reference key="6">
    <citation type="submission" date="2005-09" db="EMBL/GenBank/DDBJ databases">
        <authorList>
            <person name="Mural R.J."/>
            <person name="Istrail S."/>
            <person name="Sutton G.G."/>
            <person name="Florea L."/>
            <person name="Halpern A.L."/>
            <person name="Mobarry C.M."/>
            <person name="Lippert R."/>
            <person name="Walenz B."/>
            <person name="Shatkay H."/>
            <person name="Dew I."/>
            <person name="Miller J.R."/>
            <person name="Flanigan M.J."/>
            <person name="Edwards N.J."/>
            <person name="Bolanos R."/>
            <person name="Fasulo D."/>
            <person name="Halldorsson B.V."/>
            <person name="Hannenhalli S."/>
            <person name="Turner R."/>
            <person name="Yooseph S."/>
            <person name="Lu F."/>
            <person name="Nusskern D.R."/>
            <person name="Shue B.C."/>
            <person name="Zheng X.H."/>
            <person name="Zhong F."/>
            <person name="Delcher A.L."/>
            <person name="Huson D.H."/>
            <person name="Kravitz S.A."/>
            <person name="Mouchard L."/>
            <person name="Reinert K."/>
            <person name="Remington K.A."/>
            <person name="Clark A.G."/>
            <person name="Waterman M.S."/>
            <person name="Eichler E.E."/>
            <person name="Adams M.D."/>
            <person name="Hunkapiller M.W."/>
            <person name="Myers E.W."/>
            <person name="Venter J.C."/>
        </authorList>
    </citation>
    <scope>NUCLEOTIDE SEQUENCE [LARGE SCALE GENOMIC DNA]</scope>
</reference>
<reference key="7">
    <citation type="submission" date="1996-08" db="EMBL/GenBank/DDBJ databases">
        <authorList>
            <person name="Brenman J.E."/>
            <person name="Bredt D.S."/>
            <person name="Parkinson J.F."/>
            <person name="Manzana W.P."/>
            <person name="McClary J.A."/>
        </authorList>
    </citation>
    <scope>NUCLEOTIDE SEQUENCE [MRNA] OF 84-398</scope>
    <source>
        <tissue>Brain</tissue>
    </source>
</reference>
<reference key="8">
    <citation type="journal article" date="1995" name="Nature">
        <title>Clustering of Shaker-type K+ channels by interaction with a family of membrane-associated guanylate kinases.</title>
        <authorList>
            <person name="Kim E."/>
            <person name="Niethammer M."/>
            <person name="Rothschild A."/>
            <person name="Jan Y.N."/>
            <person name="Sheng M."/>
        </authorList>
    </citation>
    <scope>INTERACTION WITH KCNA1; KCNA2; KCNA3 AND KCNA4</scope>
</reference>
<reference key="9">
    <citation type="journal article" date="1997" name="Science">
        <title>Binding of neuroligins to PSD-95.</title>
        <authorList>
            <person name="Irie M."/>
            <person name="Hata Y."/>
            <person name="Takeuchi M."/>
            <person name="Ichtchenko K."/>
            <person name="Toyoda A."/>
            <person name="Hirao K."/>
            <person name="Takai Y."/>
            <person name="Rosahl T.W."/>
            <person name="Suedhof T.C."/>
        </authorList>
    </citation>
    <scope>INTERACTION WITH NLGN1; NLGN2 AND NLGN3</scope>
</reference>
<reference key="10">
    <citation type="journal article" date="2000" name="J. Biol. Chem.">
        <title>GAKIN, a novel kinesin-like protein associates with the human homologue of the Drosophila discs large tumor suppressor in T lymphocytes.</title>
        <authorList>
            <person name="Hanada T."/>
            <person name="Lin L."/>
            <person name="Tibaldi E.V."/>
            <person name="Reinherz E.L."/>
            <person name="Chishti A.H."/>
        </authorList>
    </citation>
    <scope>INTERACTION WITH KIF13B</scope>
</reference>
<reference key="11">
    <citation type="journal article" date="2000" name="Proc. Natl. Acad. Sci. U.S.A.">
        <title>The neuregulin receptor ErbB-4 interacts with PDZ-containing proteins at neuronal synapses.</title>
        <authorList>
            <person name="Garcia R.A."/>
            <person name="Vasudevan K."/>
            <person name="Buonanno A."/>
        </authorList>
    </citation>
    <scope>INTERACTION WITH ERBB4</scope>
</reference>
<reference key="12">
    <citation type="journal article" date="2002" name="J. Neurosci.">
        <title>Postsynaptic targeting of alternative postsynaptic density-95 isoforms by distinct mechanisms.</title>
        <authorList>
            <person name="Chetkovich D.M."/>
            <person name="Bunn R.C."/>
            <person name="Kuo S.-H."/>
            <person name="Kawasaki Y."/>
            <person name="Kohwi M."/>
            <person name="Bredt D.S."/>
        </authorList>
    </citation>
    <scope>ALTERNATIVE SPLICING</scope>
    <scope>SUBCELLULAR LOCATION</scope>
    <scope>INTERACTION WITH CASK AND HGS</scope>
</reference>
<reference key="13">
    <citation type="journal article" date="2006" name="Neuron">
        <title>SALM synaptic cell adhesion-like molecules regulate the differentiation of excitatory synapses.</title>
        <authorList>
            <person name="Ko J."/>
            <person name="Kim S."/>
            <person name="Chung H.S."/>
            <person name="Kim K."/>
            <person name="Han K."/>
            <person name="Kim H."/>
            <person name="Jun H."/>
            <person name="Kaang B.-K."/>
            <person name="Kim E."/>
        </authorList>
    </citation>
    <scope>INTERACTION WITH LRFN1; LRFN2 AND LRFN4</scope>
</reference>
<reference key="14">
    <citation type="journal article" date="2008" name="J. Neurosci.">
        <title>Preso, a novel PSD-95-interacting FERM and PDZ domain protein that regulates dendritic spine morphogenesis.</title>
        <authorList>
            <person name="Lee H.W."/>
            <person name="Choi J."/>
            <person name="Shin H."/>
            <person name="Kim K."/>
            <person name="Yang J."/>
            <person name="Na M."/>
            <person name="Choi S.Y."/>
            <person name="Kang G.B."/>
            <person name="Eom S.H."/>
            <person name="Kim H."/>
            <person name="Kim E."/>
        </authorList>
    </citation>
    <scope>INTERACTION WITH FRMPD4</scope>
</reference>
<reference key="15">
    <citation type="journal article" date="2010" name="J. Neurosci.">
        <title>Regulation of synaptic Rac1 activity, long-term potentiation maintenance, and learning and memory by BCR and ABR Rac GTPase-activating proteins.</title>
        <authorList>
            <person name="Oh D."/>
            <person name="Han S."/>
            <person name="Seo J."/>
            <person name="Lee J.R."/>
            <person name="Choi J."/>
            <person name="Groffen J."/>
            <person name="Kim K."/>
            <person name="Cho Y.S."/>
            <person name="Choi H.S."/>
            <person name="Shin H."/>
            <person name="Woo J."/>
            <person name="Won H."/>
            <person name="Park S.K."/>
            <person name="Kim S.Y."/>
            <person name="Jo J."/>
            <person name="Whitcomb D.J."/>
            <person name="Cho K."/>
            <person name="Kim H."/>
            <person name="Bae Y.C."/>
            <person name="Heisterkamp N."/>
            <person name="Choi S.Y."/>
            <person name="Kim E."/>
        </authorList>
    </citation>
    <scope>INTERACTION WITH ABR AND BCR</scope>
</reference>
<reference key="16">
    <citation type="journal article" date="2011" name="EMBO J.">
        <title>DGKiota regulates presynaptic release during mGluR-dependent LTD.</title>
        <authorList>
            <person name="Yang J."/>
            <person name="Seo J."/>
            <person name="Nair R."/>
            <person name="Han S."/>
            <person name="Jang S."/>
            <person name="Kim K."/>
            <person name="Han K."/>
            <person name="Paik S.K."/>
            <person name="Choi J."/>
            <person name="Lee S."/>
            <person name="Bae Y.C."/>
            <person name="Topham M.K."/>
            <person name="Prescott S.M."/>
            <person name="Rhee J.S."/>
            <person name="Choi S.Y."/>
            <person name="Kim E."/>
        </authorList>
    </citation>
    <scope>INTERACTION WITH DGKI</scope>
</reference>
<reference key="17">
    <citation type="journal article" date="2013" name="J. Biol. Chem.">
        <title>Brain-specific angiogenesis inhibitor-1 signaling, regulation, and enrichment in the postsynaptic density.</title>
        <authorList>
            <person name="Stephenson J.R."/>
            <person name="Paavola K.J."/>
            <person name="Schaefer S.A."/>
            <person name="Kaur B."/>
            <person name="Van Meir E.G."/>
            <person name="Hall R.A."/>
        </authorList>
    </citation>
    <scope>INTERACTION WITH ADGRB1</scope>
</reference>
<reference key="18">
    <citation type="journal article" date="2015" name="Elife">
        <title>ABHD17 proteins are novel protein depalmitoylases that regulate N-Ras palmitate turnover and subcellular localization.</title>
        <authorList>
            <person name="Lin D.T."/>
            <person name="Conibear E."/>
        </authorList>
    </citation>
    <scope>PALMITOYLATION</scope>
</reference>
<reference key="19">
    <citation type="journal article" date="2015" name="Mol. Autism">
        <title>The association of GPR85 with PSD-95-neuroligin complex and autism spectrum disorder: a molecular analysis.</title>
        <authorList>
            <person name="Fujita-Jimbo E."/>
            <person name="Tanabe Y."/>
            <person name="Yu Z."/>
            <person name="Kojima K."/>
            <person name="Mori M."/>
            <person name="Li H."/>
            <person name="Iwamoto S."/>
            <person name="Yamagata T."/>
            <person name="Momoi M.Y."/>
            <person name="Momoi T."/>
        </authorList>
    </citation>
    <scope>INTERACTION WITH GPR85</scope>
</reference>
<reference key="20">
    <citation type="journal article" date="2015" name="Nat. Commun.">
        <title>Activity-regulated trafficking of the palmitoyl-acyl transferase DHHC5.</title>
        <authorList>
            <person name="Brigidi G.S."/>
            <person name="Santyr B."/>
            <person name="Shimell J."/>
            <person name="Jovellar B."/>
            <person name="Bamji S.X."/>
        </authorList>
    </citation>
    <scope>FUNCTION</scope>
    <scope>INTERACTION WITH ZDHHC5</scope>
</reference>
<reference key="21">
    <citation type="journal article" date="2016" name="Neurol. Genet.">
        <title>Dysfunctional ADAM22 implicated in progressive encephalopathy with cortical atrophy and epilepsy.</title>
        <authorList>
            <person name="Muona M."/>
            <person name="Fukata Y."/>
            <person name="Anttonen A.K."/>
            <person name="Laari A."/>
            <person name="Palotie A."/>
            <person name="Pihko H."/>
            <person name="Loennqvist T."/>
            <person name="Valanne L."/>
            <person name="Somer M."/>
            <person name="Fukata M."/>
            <person name="Lehesjoki A.E."/>
        </authorList>
    </citation>
    <scope>INTERACTION WITH ADAM22</scope>
</reference>
<reference key="22">
    <citation type="journal article" date="2016" name="Nat. Neurosci.">
        <title>Meta-analysis of 2,104 trios provides support for 10 new genes for intellectual disability.</title>
        <authorList>
            <person name="Lelieveld S.H."/>
            <person name="Reijnders M.R."/>
            <person name="Pfundt R."/>
            <person name="Yntema H.G."/>
            <person name="Kamsteeg E.J."/>
            <person name="de Vries P."/>
            <person name="de Vries B.B."/>
            <person name="Willemsen M.H."/>
            <person name="Kleefstra T."/>
            <person name="Loehner K."/>
            <person name="Vreeburg M."/>
            <person name="Stevens S.J."/>
            <person name="van der Burgt I."/>
            <person name="Bongers E.M."/>
            <person name="Stegmann A.P."/>
            <person name="Rump P."/>
            <person name="Rinne T."/>
            <person name="Nelen M.R."/>
            <person name="Veltman J.A."/>
            <person name="Vissers L.E."/>
            <person name="Brunner H.G."/>
            <person name="Gilissen C."/>
        </authorList>
    </citation>
    <scope>INVOLVEMENT IN MRD62</scope>
    <scope>VARIANTS MRD62 309-ARG--LEU-724 DEL AND 368-ARG--LEU-724 DEL</scope>
</reference>
<reference key="23">
    <citation type="journal article" date="2018" name="Clin. Genet.">
        <title>Truncating variants of the DLG4 gene are responsible for intellectual disability with marfanoid features.</title>
        <authorList>
            <person name="Moutton S."/>
            <person name="Bruel A.L."/>
            <person name="Assoum M."/>
            <person name="Chevarin M."/>
            <person name="Sarrazin E."/>
            <person name="Goizet C."/>
            <person name="Guerrot A.M."/>
            <person name="Charollais A."/>
            <person name="Charles P."/>
            <person name="Heron D."/>
            <person name="Faudet A."/>
            <person name="Houcinat N."/>
            <person name="Vitobello A."/>
            <person name="Tran-Mau-Them F."/>
            <person name="Philippe C."/>
            <person name="Duffourd Y."/>
            <person name="Thauvin-Robinet C."/>
            <person name="Faivre L."/>
        </authorList>
    </citation>
    <scope>INVOLVEMENT IN MRD62</scope>
</reference>
<reference key="24">
    <citation type="journal article" date="2002" name="J. Biol. Chem.">
        <title>The PDZ1 domain of SAP90. Characterization of structure and binding.</title>
        <authorList>
            <person name="Piserchio A."/>
            <person name="Pellegrini M."/>
            <person name="Mehta S."/>
            <person name="Blackman S.M."/>
            <person name="Garcia E.P."/>
            <person name="Marshall J."/>
            <person name="Mierke D.F."/>
        </authorList>
    </citation>
    <scope>STRUCTURE BY NMR OF 105-197</scope>
    <scope>INTERACTION WITH GRIK2; KCNA4 AND CRIPT</scope>
</reference>
<dbReference type="EMBL" id="U83192">
    <property type="protein sequence ID" value="AAC52113.1"/>
    <property type="molecule type" value="mRNA"/>
</dbReference>
<dbReference type="EMBL" id="AF156495">
    <property type="protein sequence ID" value="AAD56173.1"/>
    <property type="molecule type" value="Genomic_DNA"/>
</dbReference>
<dbReference type="EMBL" id="AK293835">
    <property type="protein sequence ID" value="BAH11607.1"/>
    <property type="molecule type" value="mRNA"/>
</dbReference>
<dbReference type="EMBL" id="AC120057">
    <property type="status" value="NOT_ANNOTATED_CDS"/>
    <property type="molecule type" value="Genomic_DNA"/>
</dbReference>
<dbReference type="EMBL" id="CH471108">
    <property type="protein sequence ID" value="EAW90255.1"/>
    <property type="molecule type" value="Genomic_DNA"/>
</dbReference>
<dbReference type="EMBL" id="U68138">
    <property type="protein sequence ID" value="AAB07736.1"/>
    <property type="status" value="ALT_INIT"/>
    <property type="molecule type" value="mRNA"/>
</dbReference>
<dbReference type="CCDS" id="CCDS45599.1">
    <molecule id="P78352-2"/>
</dbReference>
<dbReference type="CCDS" id="CCDS45600.1">
    <molecule id="P78352-3"/>
</dbReference>
<dbReference type="CCDS" id="CCDS82050.1">
    <molecule id="P78352-1"/>
</dbReference>
<dbReference type="PIR" id="T09599">
    <property type="entry name" value="T09599"/>
</dbReference>
<dbReference type="RefSeq" id="NP_001122299.1">
    <molecule id="P78352-3"/>
    <property type="nucleotide sequence ID" value="NM_001128827.4"/>
</dbReference>
<dbReference type="RefSeq" id="NP_001308004.1">
    <molecule id="P78352-1"/>
    <property type="nucleotide sequence ID" value="NM_001321075.3"/>
</dbReference>
<dbReference type="RefSeq" id="NP_001356.1">
    <molecule id="P78352-2"/>
    <property type="nucleotide sequence ID" value="NM_001365.5"/>
</dbReference>
<dbReference type="PDB" id="1KEF">
    <property type="method" value="NMR"/>
    <property type="chains" value="A=62-154"/>
</dbReference>
<dbReference type="PDB" id="2MES">
    <property type="method" value="NMR"/>
    <property type="chains" value="B=1-71"/>
</dbReference>
<dbReference type="PDB" id="3I4W">
    <property type="method" value="X-ray"/>
    <property type="resolution" value="1.35 A"/>
    <property type="chains" value="A/B/C/D=302-403"/>
</dbReference>
<dbReference type="PDB" id="3K82">
    <property type="method" value="X-ray"/>
    <property type="resolution" value="1.40 A"/>
    <property type="chains" value="A=305-402"/>
</dbReference>
<dbReference type="PDB" id="3ZRT">
    <property type="method" value="X-ray"/>
    <property type="resolution" value="3.40 A"/>
    <property type="chains" value="A/B/C/D=61-249"/>
</dbReference>
<dbReference type="PDB" id="5J7J">
    <property type="method" value="NMR"/>
    <property type="chains" value="B=1-19"/>
</dbReference>
<dbReference type="PDB" id="5JXB">
    <property type="method" value="X-ray"/>
    <property type="resolution" value="2.90 A"/>
    <property type="chains" value="A/C=309-413"/>
</dbReference>
<dbReference type="PDB" id="6QJD">
    <property type="method" value="X-ray"/>
    <property type="resolution" value="1.55 A"/>
    <property type="chains" value="A/B/C/D=302-393"/>
</dbReference>
<dbReference type="PDB" id="6QJF">
    <property type="method" value="X-ray"/>
    <property type="resolution" value="1.50 A"/>
    <property type="chains" value="A/B/C/D=302-403"/>
</dbReference>
<dbReference type="PDB" id="6QJG">
    <property type="method" value="X-ray"/>
    <property type="resolution" value="2.00 A"/>
    <property type="chains" value="A/B/C/D=302-403"/>
</dbReference>
<dbReference type="PDB" id="6QJI">
    <property type="method" value="X-ray"/>
    <property type="resolution" value="1.50 A"/>
    <property type="chains" value="A/B/C/D/E/F=305-403"/>
</dbReference>
<dbReference type="PDB" id="6QJJ">
    <property type="method" value="X-ray"/>
    <property type="resolution" value="1.70 A"/>
    <property type="chains" value="A=305-403"/>
</dbReference>
<dbReference type="PDB" id="6QJK">
    <property type="method" value="X-ray"/>
    <property type="resolution" value="1.05 A"/>
    <property type="chains" value="A=305-402"/>
</dbReference>
<dbReference type="PDB" id="6QJL">
    <property type="method" value="X-ray"/>
    <property type="resolution" value="1.04 A"/>
    <property type="chains" value="A/B=302-403"/>
</dbReference>
<dbReference type="PDB" id="6QJN">
    <property type="method" value="X-ray"/>
    <property type="resolution" value="1.80 A"/>
    <property type="chains" value="A/B=302-403"/>
</dbReference>
<dbReference type="PDB" id="6SPV">
    <property type="method" value="X-ray"/>
    <property type="resolution" value="2.04 A"/>
    <property type="chains" value="A=55-249"/>
</dbReference>
<dbReference type="PDB" id="6SPZ">
    <property type="method" value="X-ray"/>
    <property type="resolution" value="2.08 A"/>
    <property type="chains" value="A=55-249"/>
</dbReference>
<dbReference type="PDB" id="8AH4">
    <property type="method" value="X-ray"/>
    <property type="resolution" value="1.48 A"/>
    <property type="chains" value="A/B/C/D/E/F=302-403"/>
</dbReference>
<dbReference type="PDB" id="8AH5">
    <property type="method" value="X-ray"/>
    <property type="resolution" value="1.25 A"/>
    <property type="chains" value="A=302-403"/>
</dbReference>
<dbReference type="PDB" id="8AH6">
    <property type="method" value="X-ray"/>
    <property type="resolution" value="1.63 A"/>
    <property type="chains" value="A/B=302-403"/>
</dbReference>
<dbReference type="PDB" id="8AH7">
    <property type="method" value="X-ray"/>
    <property type="resolution" value="1.25 A"/>
    <property type="chains" value="A=302-403"/>
</dbReference>
<dbReference type="PDB" id="8AH8">
    <property type="method" value="X-ray"/>
    <property type="resolution" value="1.50 A"/>
    <property type="chains" value="A=302-403"/>
</dbReference>
<dbReference type="PDBsum" id="1KEF"/>
<dbReference type="PDBsum" id="2MES"/>
<dbReference type="PDBsum" id="3I4W"/>
<dbReference type="PDBsum" id="3K82"/>
<dbReference type="PDBsum" id="3ZRT"/>
<dbReference type="PDBsum" id="5J7J"/>
<dbReference type="PDBsum" id="5JXB"/>
<dbReference type="PDBsum" id="6QJD"/>
<dbReference type="PDBsum" id="6QJF"/>
<dbReference type="PDBsum" id="6QJG"/>
<dbReference type="PDBsum" id="6QJI"/>
<dbReference type="PDBsum" id="6QJJ"/>
<dbReference type="PDBsum" id="6QJK"/>
<dbReference type="PDBsum" id="6QJL"/>
<dbReference type="PDBsum" id="6QJN"/>
<dbReference type="PDBsum" id="6SPV"/>
<dbReference type="PDBsum" id="6SPZ"/>
<dbReference type="PDBsum" id="8AH4"/>
<dbReference type="PDBsum" id="8AH5"/>
<dbReference type="PDBsum" id="8AH6"/>
<dbReference type="PDBsum" id="8AH7"/>
<dbReference type="PDBsum" id="8AH8"/>
<dbReference type="BMRB" id="P78352"/>
<dbReference type="SASBDB" id="P78352"/>
<dbReference type="SMR" id="P78352"/>
<dbReference type="BioGRID" id="108086">
    <property type="interactions" value="143"/>
</dbReference>
<dbReference type="ComplexPortal" id="CPX-6186">
    <property type="entry name" value="Scribble cell polarity complex, DLG4-LLGL2-SCRIB variant"/>
</dbReference>
<dbReference type="ComplexPortal" id="CPX-6189">
    <property type="entry name" value="Scribble cell polarity complex, DLG4-LLGL1-SCRIB variant"/>
</dbReference>
<dbReference type="CORUM" id="P78352"/>
<dbReference type="DIP" id="DIP-30919N"/>
<dbReference type="FunCoup" id="P78352">
    <property type="interactions" value="1053"/>
</dbReference>
<dbReference type="IntAct" id="P78352">
    <property type="interactions" value="84"/>
</dbReference>
<dbReference type="MINT" id="P78352"/>
<dbReference type="STRING" id="9606.ENSP00000497806"/>
<dbReference type="BindingDB" id="P78352"/>
<dbReference type="ChEMBL" id="CHEMBL5666"/>
<dbReference type="DrugBank" id="DB00536">
    <property type="generic name" value="Guanidine"/>
</dbReference>
<dbReference type="DrugBank" id="DB01972">
    <property type="generic name" value="Guanosine-5'-Monophosphate"/>
</dbReference>
<dbReference type="MoonDB" id="P78352">
    <property type="type" value="Predicted"/>
</dbReference>
<dbReference type="TCDB" id="8.A.24.1.3">
    <property type="family name" value="the ezrin/radixin/moesin-binding phosphoprotein 50 (ebp50) family"/>
</dbReference>
<dbReference type="GlyGen" id="P78352">
    <property type="glycosylation" value="1 site, 1 O-linked glycan (1 site)"/>
</dbReference>
<dbReference type="iPTMnet" id="P78352"/>
<dbReference type="PhosphoSitePlus" id="P78352"/>
<dbReference type="SwissPalm" id="P78352"/>
<dbReference type="BioMuta" id="DLG4"/>
<dbReference type="DMDM" id="71658825"/>
<dbReference type="jPOST" id="P78352"/>
<dbReference type="MassIVE" id="P78352"/>
<dbReference type="PaxDb" id="9606-ENSP00000382428"/>
<dbReference type="PeptideAtlas" id="P78352"/>
<dbReference type="ProteomicsDB" id="33819"/>
<dbReference type="ProteomicsDB" id="57584">
    <molecule id="P78352-1"/>
</dbReference>
<dbReference type="ProteomicsDB" id="57585">
    <molecule id="P78352-2"/>
</dbReference>
<dbReference type="ABCD" id="P78352">
    <property type="antibodies" value="3 sequenced antibodies"/>
</dbReference>
<dbReference type="Antibodypedia" id="1930">
    <property type="antibodies" value="853 antibodies from 49 providers"/>
</dbReference>
<dbReference type="DNASU" id="1742"/>
<dbReference type="Ensembl" id="ENST00000302955.11">
    <molecule id="P78352-3"/>
    <property type="protein sequence ID" value="ENSP00000307471.6"/>
    <property type="gene ID" value="ENSG00000132535.23"/>
</dbReference>
<dbReference type="Ensembl" id="ENST00000399506.9">
    <molecule id="P78352-1"/>
    <property type="protein sequence ID" value="ENSP00000382425.2"/>
    <property type="gene ID" value="ENSG00000132535.23"/>
</dbReference>
<dbReference type="Ensembl" id="ENST00000648172.9">
    <molecule id="P78352-2"/>
    <property type="protein sequence ID" value="ENSP00000497806.3"/>
    <property type="gene ID" value="ENSG00000132535.23"/>
</dbReference>
<dbReference type="GeneID" id="1742"/>
<dbReference type="KEGG" id="hsa:1742"/>
<dbReference type="MANE-Select" id="ENST00000399506.9">
    <property type="protein sequence ID" value="ENSP00000382425.2"/>
    <property type="RefSeq nucleotide sequence ID" value="NM_001321075.3"/>
    <property type="RefSeq protein sequence ID" value="NP_001308004.1"/>
</dbReference>
<dbReference type="UCSC" id="uc002get.5">
    <molecule id="P78352-1"/>
    <property type="organism name" value="human"/>
</dbReference>
<dbReference type="AGR" id="HGNC:2903"/>
<dbReference type="CTD" id="1742"/>
<dbReference type="DisGeNET" id="1742"/>
<dbReference type="GeneCards" id="DLG4"/>
<dbReference type="GeneReviews" id="DLG4"/>
<dbReference type="HGNC" id="HGNC:2903">
    <property type="gene designation" value="DLG4"/>
</dbReference>
<dbReference type="HPA" id="ENSG00000132535">
    <property type="expression patterns" value="Group enriched (brain, pituitary gland, retina)"/>
</dbReference>
<dbReference type="MalaCards" id="DLG4"/>
<dbReference type="MIM" id="602887">
    <property type="type" value="gene"/>
</dbReference>
<dbReference type="MIM" id="618793">
    <property type="type" value="phenotype"/>
</dbReference>
<dbReference type="neXtProt" id="NX_P78352"/>
<dbReference type="OpenTargets" id="ENSG00000132535"/>
<dbReference type="Orphanet" id="528084">
    <property type="disease" value="Non-specific syndromic intellectual disability"/>
</dbReference>
<dbReference type="PharmGKB" id="PA27359"/>
<dbReference type="VEuPathDB" id="HostDB:ENSG00000132535"/>
<dbReference type="eggNOG" id="KOG0708">
    <property type="taxonomic scope" value="Eukaryota"/>
</dbReference>
<dbReference type="GeneTree" id="ENSGT00940000157956"/>
<dbReference type="HOGENOM" id="CLU_001715_4_2_1"/>
<dbReference type="InParanoid" id="P78352"/>
<dbReference type="OMA" id="XANSPPV"/>
<dbReference type="OrthoDB" id="78824at2759"/>
<dbReference type="PAN-GO" id="P78352">
    <property type="GO annotations" value="7 GO annotations based on evolutionary models"/>
</dbReference>
<dbReference type="PhylomeDB" id="P78352"/>
<dbReference type="TreeFam" id="TF323171"/>
<dbReference type="PathwayCommons" id="P78352"/>
<dbReference type="Reactome" id="R-HSA-1236394">
    <property type="pathway name" value="Signaling by ERBB4"/>
</dbReference>
<dbReference type="Reactome" id="R-HSA-399719">
    <property type="pathway name" value="Trafficking of AMPA receptors"/>
</dbReference>
<dbReference type="Reactome" id="R-HSA-438066">
    <property type="pathway name" value="Unblocking of NMDA receptors, glutamate binding and activation"/>
</dbReference>
<dbReference type="Reactome" id="R-HSA-442982">
    <property type="pathway name" value="Ras activation upon Ca2+ influx through NMDA receptor"/>
</dbReference>
<dbReference type="Reactome" id="R-HSA-447038">
    <property type="pathway name" value="NrCAM interactions"/>
</dbReference>
<dbReference type="Reactome" id="R-HSA-451308">
    <property type="pathway name" value="Activation of Ca-permeable Kainate Receptor"/>
</dbReference>
<dbReference type="Reactome" id="R-HSA-5625900">
    <property type="pathway name" value="RHO GTPases activate CIT"/>
</dbReference>
<dbReference type="Reactome" id="R-HSA-5673001">
    <property type="pathway name" value="RAF/MAP kinase cascade"/>
</dbReference>
<dbReference type="Reactome" id="R-HSA-5682910">
    <property type="pathway name" value="LGI-ADAM interactions"/>
</dbReference>
<dbReference type="Reactome" id="R-HSA-6794361">
    <property type="pathway name" value="Neurexins and neuroligins"/>
</dbReference>
<dbReference type="Reactome" id="R-HSA-8849932">
    <property type="pathway name" value="Synaptic adhesion-like molecules"/>
</dbReference>
<dbReference type="Reactome" id="R-HSA-9609736">
    <property type="pathway name" value="Assembly and cell surface presentation of NMDA receptors"/>
</dbReference>
<dbReference type="Reactome" id="R-HSA-9617324">
    <property type="pathway name" value="Negative regulation of NMDA receptor-mediated neuronal transmission"/>
</dbReference>
<dbReference type="Reactome" id="R-HSA-9620244">
    <property type="pathway name" value="Long-term potentiation"/>
</dbReference>
<dbReference type="SignaLink" id="P78352"/>
<dbReference type="SIGNOR" id="P78352"/>
<dbReference type="BioGRID-ORCS" id="1742">
    <property type="hits" value="13 hits in 1158 CRISPR screens"/>
</dbReference>
<dbReference type="CD-CODE" id="FB4E32DD">
    <property type="entry name" value="Presynaptic clusters and postsynaptic densities"/>
</dbReference>
<dbReference type="ChiTaRS" id="DLG4">
    <property type="organism name" value="human"/>
</dbReference>
<dbReference type="EvolutionaryTrace" id="P78352"/>
<dbReference type="GeneWiki" id="DLG4"/>
<dbReference type="GenomeRNAi" id="1742"/>
<dbReference type="Pharos" id="P78352">
    <property type="development level" value="Tchem"/>
</dbReference>
<dbReference type="PRO" id="PR:P78352"/>
<dbReference type="Proteomes" id="UP000005640">
    <property type="component" value="Chromosome 17"/>
</dbReference>
<dbReference type="RNAct" id="P78352">
    <property type="molecule type" value="protein"/>
</dbReference>
<dbReference type="Bgee" id="ENSG00000132535">
    <property type="expression patterns" value="Expressed in right hemisphere of cerebellum and 121 other cell types or tissues"/>
</dbReference>
<dbReference type="ExpressionAtlas" id="P78352">
    <property type="expression patterns" value="baseline and differential"/>
</dbReference>
<dbReference type="GO" id="GO:0005912">
    <property type="term" value="C:adherens junction"/>
    <property type="evidence" value="ECO:0000303"/>
    <property type="project" value="ComplexPortal"/>
</dbReference>
<dbReference type="GO" id="GO:0032281">
    <property type="term" value="C:AMPA glutamate receptor complex"/>
    <property type="evidence" value="ECO:0000250"/>
    <property type="project" value="BHF-UCL"/>
</dbReference>
<dbReference type="GO" id="GO:0030054">
    <property type="term" value="C:cell junction"/>
    <property type="evidence" value="ECO:0000250"/>
    <property type="project" value="BHF-UCL"/>
</dbReference>
<dbReference type="GO" id="GO:0044300">
    <property type="term" value="C:cerebellar mossy fiber"/>
    <property type="evidence" value="ECO:0007669"/>
    <property type="project" value="Ensembl"/>
</dbReference>
<dbReference type="GO" id="GO:0030863">
    <property type="term" value="C:cortical cytoskeleton"/>
    <property type="evidence" value="ECO:0000314"/>
    <property type="project" value="UniProtKB"/>
</dbReference>
<dbReference type="GO" id="GO:0005737">
    <property type="term" value="C:cytoplasm"/>
    <property type="evidence" value="ECO:0000250"/>
    <property type="project" value="BHF-UCL"/>
</dbReference>
<dbReference type="GO" id="GO:0005829">
    <property type="term" value="C:cytosol"/>
    <property type="evidence" value="ECO:0000304"/>
    <property type="project" value="Reactome"/>
</dbReference>
<dbReference type="GO" id="GO:0032839">
    <property type="term" value="C:dendrite cytoplasm"/>
    <property type="evidence" value="ECO:0000250"/>
    <property type="project" value="BHF-UCL"/>
</dbReference>
<dbReference type="GO" id="GO:0043197">
    <property type="term" value="C:dendritic spine"/>
    <property type="evidence" value="ECO:0000250"/>
    <property type="project" value="ParkinsonsUK-UCL"/>
</dbReference>
<dbReference type="GO" id="GO:0030666">
    <property type="term" value="C:endocytic vesicle membrane"/>
    <property type="evidence" value="ECO:0000304"/>
    <property type="project" value="Reactome"/>
</dbReference>
<dbReference type="GO" id="GO:0005783">
    <property type="term" value="C:endoplasmic reticulum"/>
    <property type="evidence" value="ECO:0000250"/>
    <property type="project" value="BHF-UCL"/>
</dbReference>
<dbReference type="GO" id="GO:0060076">
    <property type="term" value="C:excitatory synapse"/>
    <property type="evidence" value="ECO:0000250"/>
    <property type="project" value="BHF-UCL"/>
</dbReference>
<dbReference type="GO" id="GO:0098978">
    <property type="term" value="C:glutamatergic synapse"/>
    <property type="evidence" value="ECO:0007669"/>
    <property type="project" value="Ensembl"/>
</dbReference>
<dbReference type="GO" id="GO:0044224">
    <property type="term" value="C:juxtaparanode region of axon"/>
    <property type="evidence" value="ECO:0000250"/>
    <property type="project" value="BHF-UCL"/>
</dbReference>
<dbReference type="GO" id="GO:0031594">
    <property type="term" value="C:neuromuscular junction"/>
    <property type="evidence" value="ECO:0000318"/>
    <property type="project" value="GO_Central"/>
</dbReference>
<dbReference type="GO" id="GO:0043005">
    <property type="term" value="C:neuron projection"/>
    <property type="evidence" value="ECO:0000318"/>
    <property type="project" value="GO_Central"/>
</dbReference>
<dbReference type="GO" id="GO:0044306">
    <property type="term" value="C:neuron projection terminus"/>
    <property type="evidence" value="ECO:0000250"/>
    <property type="project" value="BHF-UCL"/>
</dbReference>
<dbReference type="GO" id="GO:0044309">
    <property type="term" value="C:neuron spine"/>
    <property type="evidence" value="ECO:0000250"/>
    <property type="project" value="BHF-UCL"/>
</dbReference>
<dbReference type="GO" id="GO:0005886">
    <property type="term" value="C:plasma membrane"/>
    <property type="evidence" value="ECO:0000304"/>
    <property type="project" value="Reactome"/>
</dbReference>
<dbReference type="GO" id="GO:0014069">
    <property type="term" value="C:postsynaptic density"/>
    <property type="evidence" value="ECO:0000250"/>
    <property type="project" value="UniProtKB"/>
</dbReference>
<dbReference type="GO" id="GO:0098839">
    <property type="term" value="C:postsynaptic density membrane"/>
    <property type="evidence" value="ECO:0000318"/>
    <property type="project" value="GO_Central"/>
</dbReference>
<dbReference type="GO" id="GO:0045211">
    <property type="term" value="C:postsynaptic membrane"/>
    <property type="evidence" value="ECO:0000314"/>
    <property type="project" value="UniProtKB"/>
</dbReference>
<dbReference type="GO" id="GO:0045202">
    <property type="term" value="C:synapse"/>
    <property type="evidence" value="ECO:0000314"/>
    <property type="project" value="BHF-UCL"/>
</dbReference>
<dbReference type="GO" id="GO:0097060">
    <property type="term" value="C:synaptic membrane"/>
    <property type="evidence" value="ECO:0000250"/>
    <property type="project" value="ARUK-UCL"/>
</dbReference>
<dbReference type="GO" id="GO:0008021">
    <property type="term" value="C:synaptic vesicle"/>
    <property type="evidence" value="ECO:0000250"/>
    <property type="project" value="BHF-UCL"/>
</dbReference>
<dbReference type="GO" id="GO:0033130">
    <property type="term" value="F:acetylcholine receptor binding"/>
    <property type="evidence" value="ECO:0000250"/>
    <property type="project" value="BHF-UCL"/>
</dbReference>
<dbReference type="GO" id="GO:0031697">
    <property type="term" value="F:beta-1 adrenergic receptor binding"/>
    <property type="evidence" value="ECO:0000250"/>
    <property type="project" value="BHF-UCL"/>
</dbReference>
<dbReference type="GO" id="GO:0031748">
    <property type="term" value="F:D1 dopamine receptor binding"/>
    <property type="evidence" value="ECO:0000250"/>
    <property type="project" value="BHF-UCL"/>
</dbReference>
<dbReference type="GO" id="GO:0035255">
    <property type="term" value="F:ionotropic glutamate receptor binding"/>
    <property type="evidence" value="ECO:0000250"/>
    <property type="project" value="BHF-UCL"/>
</dbReference>
<dbReference type="GO" id="GO:0019900">
    <property type="term" value="F:kinase binding"/>
    <property type="evidence" value="ECO:0000314"/>
    <property type="project" value="MGI"/>
</dbReference>
<dbReference type="GO" id="GO:0097109">
    <property type="term" value="F:neuroligin family protein binding"/>
    <property type="evidence" value="ECO:0000250"/>
    <property type="project" value="BHF-UCL"/>
</dbReference>
<dbReference type="GO" id="GO:0031812">
    <property type="term" value="F:P2Y1 nucleotide receptor binding"/>
    <property type="evidence" value="ECO:0000250"/>
    <property type="project" value="BHF-UCL"/>
</dbReference>
<dbReference type="GO" id="GO:0030165">
    <property type="term" value="F:PDZ domain binding"/>
    <property type="evidence" value="ECO:0000250"/>
    <property type="project" value="BHF-UCL"/>
</dbReference>
<dbReference type="GO" id="GO:0019901">
    <property type="term" value="F:protein kinase binding"/>
    <property type="evidence" value="ECO:0000318"/>
    <property type="project" value="GO_Central"/>
</dbReference>
<dbReference type="GO" id="GO:0019903">
    <property type="term" value="F:protein phosphatase binding"/>
    <property type="evidence" value="ECO:0000250"/>
    <property type="project" value="BHF-UCL"/>
</dbReference>
<dbReference type="GO" id="GO:0044877">
    <property type="term" value="F:protein-containing complex binding"/>
    <property type="evidence" value="ECO:0000250"/>
    <property type="project" value="BHF-UCL"/>
</dbReference>
<dbReference type="GO" id="GO:0097110">
    <property type="term" value="F:scaffold protein binding"/>
    <property type="evidence" value="ECO:0000250"/>
    <property type="project" value="BHF-UCL"/>
</dbReference>
<dbReference type="GO" id="GO:0097113">
    <property type="term" value="P:AMPA glutamate receptor clustering"/>
    <property type="evidence" value="ECO:0000250"/>
    <property type="project" value="BHF-UCL"/>
</dbReference>
<dbReference type="GO" id="GO:0098609">
    <property type="term" value="P:cell-cell adhesion"/>
    <property type="evidence" value="ECO:0000318"/>
    <property type="project" value="GO_Central"/>
</dbReference>
<dbReference type="GO" id="GO:0035865">
    <property type="term" value="P:cellular response to potassium ion"/>
    <property type="evidence" value="ECO:0000250"/>
    <property type="project" value="ARUK-UCL"/>
</dbReference>
<dbReference type="GO" id="GO:0007268">
    <property type="term" value="P:chemical synaptic transmission"/>
    <property type="evidence" value="ECO:0000318"/>
    <property type="project" value="GO_Central"/>
</dbReference>
<dbReference type="GO" id="GO:0060997">
    <property type="term" value="P:dendritic spine morphogenesis"/>
    <property type="evidence" value="ECO:0000250"/>
    <property type="project" value="BHF-UCL"/>
</dbReference>
<dbReference type="GO" id="GO:0045184">
    <property type="term" value="P:establishment of protein localization"/>
    <property type="evidence" value="ECO:0000314"/>
    <property type="project" value="BHF-UCL"/>
</dbReference>
<dbReference type="GO" id="GO:0045197">
    <property type="term" value="P:establishment or maintenance of epithelial cell apical/basal polarity"/>
    <property type="evidence" value="ECO:0000303"/>
    <property type="project" value="ComplexPortal"/>
</dbReference>
<dbReference type="GO" id="GO:0007612">
    <property type="term" value="P:learning"/>
    <property type="evidence" value="ECO:0000304"/>
    <property type="project" value="ProtInc"/>
</dbReference>
<dbReference type="GO" id="GO:0035641">
    <property type="term" value="P:locomotory exploration behavior"/>
    <property type="evidence" value="ECO:0007669"/>
    <property type="project" value="Ensembl"/>
</dbReference>
<dbReference type="GO" id="GO:0002091">
    <property type="term" value="P:negative regulation of receptor internalization"/>
    <property type="evidence" value="ECO:0000250"/>
    <property type="project" value="BHF-UCL"/>
</dbReference>
<dbReference type="GO" id="GO:0007399">
    <property type="term" value="P:nervous system development"/>
    <property type="evidence" value="ECO:0000318"/>
    <property type="project" value="GO_Central"/>
</dbReference>
<dbReference type="GO" id="GO:0050885">
    <property type="term" value="P:neuromuscular process controlling balance"/>
    <property type="evidence" value="ECO:0007669"/>
    <property type="project" value="Ensembl"/>
</dbReference>
<dbReference type="GO" id="GO:0099645">
    <property type="term" value="P:neurotransmitter receptor localization to postsynaptic specialization membrane"/>
    <property type="evidence" value="ECO:0007669"/>
    <property type="project" value="Ensembl"/>
</dbReference>
<dbReference type="GO" id="GO:0098989">
    <property type="term" value="P:NMDA selective glutamate receptor signaling pathway"/>
    <property type="evidence" value="ECO:0000250"/>
    <property type="project" value="BHF-UCL"/>
</dbReference>
<dbReference type="GO" id="GO:0007204">
    <property type="term" value="P:positive regulation of cytosolic calcium ion concentration"/>
    <property type="evidence" value="ECO:0000250"/>
    <property type="project" value="BHF-UCL"/>
</dbReference>
<dbReference type="GO" id="GO:2000463">
    <property type="term" value="P:positive regulation of excitatory postsynaptic potential"/>
    <property type="evidence" value="ECO:0000250"/>
    <property type="project" value="BHF-UCL"/>
</dbReference>
<dbReference type="GO" id="GO:0150012">
    <property type="term" value="P:positive regulation of neuron projection arborization"/>
    <property type="evidence" value="ECO:0000250"/>
    <property type="project" value="ARUK-UCL"/>
</dbReference>
<dbReference type="GO" id="GO:0050806">
    <property type="term" value="P:positive regulation of synaptic transmission"/>
    <property type="evidence" value="ECO:0000250"/>
    <property type="project" value="BHF-UCL"/>
</dbReference>
<dbReference type="GO" id="GO:0035418">
    <property type="term" value="P:protein localization to synapse"/>
    <property type="evidence" value="ECO:0000314"/>
    <property type="project" value="BHF-UCL"/>
</dbReference>
<dbReference type="GO" id="GO:0065003">
    <property type="term" value="P:protein-containing complex assembly"/>
    <property type="evidence" value="ECO:0000314"/>
    <property type="project" value="BHF-UCL"/>
</dbReference>
<dbReference type="GO" id="GO:0097120">
    <property type="term" value="P:receptor localization to synapse"/>
    <property type="evidence" value="ECO:0000250"/>
    <property type="project" value="BHF-UCL"/>
</dbReference>
<dbReference type="GO" id="GO:2000821">
    <property type="term" value="P:regulation of grooming behavior"/>
    <property type="evidence" value="ECO:0007669"/>
    <property type="project" value="Ensembl"/>
</dbReference>
<dbReference type="GO" id="GO:0048169">
    <property type="term" value="P:regulation of long-term neuronal synaptic plasticity"/>
    <property type="evidence" value="ECO:0000250"/>
    <property type="project" value="BHF-UCL"/>
</dbReference>
<dbReference type="GO" id="GO:0099072">
    <property type="term" value="P:regulation of postsynaptic membrane neurotransmitter receptor levels"/>
    <property type="evidence" value="ECO:0000318"/>
    <property type="project" value="GO_Central"/>
</dbReference>
<dbReference type="GO" id="GO:0007165">
    <property type="term" value="P:signal transduction"/>
    <property type="evidence" value="ECO:0000304"/>
    <property type="project" value="ProtInc"/>
</dbReference>
<dbReference type="GO" id="GO:0035176">
    <property type="term" value="P:social behavior"/>
    <property type="evidence" value="ECO:0007669"/>
    <property type="project" value="Ensembl"/>
</dbReference>
<dbReference type="GO" id="GO:0016188">
    <property type="term" value="P:synaptic vesicle maturation"/>
    <property type="evidence" value="ECO:0000250"/>
    <property type="project" value="BHF-UCL"/>
</dbReference>
<dbReference type="GO" id="GO:0071625">
    <property type="term" value="P:vocalization behavior"/>
    <property type="evidence" value="ECO:0007669"/>
    <property type="project" value="Ensembl"/>
</dbReference>
<dbReference type="CDD" id="cd00071">
    <property type="entry name" value="GMPK"/>
    <property type="match status" value="1"/>
</dbReference>
<dbReference type="CDD" id="cd06723">
    <property type="entry name" value="PDZ1_Dlg1-2-4-like"/>
    <property type="match status" value="1"/>
</dbReference>
<dbReference type="CDD" id="cd06724">
    <property type="entry name" value="PDZ2_Dlg1-2-4-like"/>
    <property type="match status" value="1"/>
</dbReference>
<dbReference type="CDD" id="cd06795">
    <property type="entry name" value="PDZ3_Dlg1-2-4-like"/>
    <property type="match status" value="1"/>
</dbReference>
<dbReference type="CDD" id="cd12030">
    <property type="entry name" value="SH3_DLG4"/>
    <property type="match status" value="1"/>
</dbReference>
<dbReference type="FunFam" id="3.40.50.300:FF:001402">
    <property type="entry name" value="Discs, large homolog 3 (Drosophila)"/>
    <property type="match status" value="1"/>
</dbReference>
<dbReference type="FunFam" id="2.30.42.10:FF:000001">
    <property type="entry name" value="Disks large homolog 1 isoform 2"/>
    <property type="match status" value="1"/>
</dbReference>
<dbReference type="FunFam" id="3.30.63.10:FF:000001">
    <property type="entry name" value="Disks large homolog 1 isoform 2"/>
    <property type="match status" value="1"/>
</dbReference>
<dbReference type="FunFam" id="2.30.42.10:FF:000091">
    <property type="entry name" value="disks large homolog 1 isoform X8"/>
    <property type="match status" value="1"/>
</dbReference>
<dbReference type="FunFam" id="2.30.42.10:FF:000002">
    <property type="entry name" value="Disks large homolog 4 isoform 2"/>
    <property type="match status" value="1"/>
</dbReference>
<dbReference type="FunFam" id="2.30.30.40:FF:000106">
    <property type="entry name" value="disks large homolog 4 isoform X2"/>
    <property type="match status" value="1"/>
</dbReference>
<dbReference type="Gene3D" id="2.30.42.10">
    <property type="match status" value="3"/>
</dbReference>
<dbReference type="Gene3D" id="3.30.63.10">
    <property type="entry name" value="Guanylate Kinase phosphate binding domain"/>
    <property type="match status" value="1"/>
</dbReference>
<dbReference type="Gene3D" id="3.40.50.300">
    <property type="entry name" value="P-loop containing nucleotide triphosphate hydrolases"/>
    <property type="match status" value="1"/>
</dbReference>
<dbReference type="Gene3D" id="2.30.30.40">
    <property type="entry name" value="SH3 Domains"/>
    <property type="match status" value="1"/>
</dbReference>
<dbReference type="InterPro" id="IPR019583">
    <property type="entry name" value="DLG1-4_PDZ_assoc"/>
</dbReference>
<dbReference type="InterPro" id="IPR016313">
    <property type="entry name" value="DLG1-like"/>
</dbReference>
<dbReference type="InterPro" id="IPR019590">
    <property type="entry name" value="DLG1_PEST_dom"/>
</dbReference>
<dbReference type="InterPro" id="IPR008145">
    <property type="entry name" value="GK/Ca_channel_bsu"/>
</dbReference>
<dbReference type="InterPro" id="IPR008144">
    <property type="entry name" value="Guanylate_kin-like_dom"/>
</dbReference>
<dbReference type="InterPro" id="IPR020590">
    <property type="entry name" value="Guanylate_kinase_CS"/>
</dbReference>
<dbReference type="InterPro" id="IPR027417">
    <property type="entry name" value="P-loop_NTPase"/>
</dbReference>
<dbReference type="InterPro" id="IPR001478">
    <property type="entry name" value="PDZ"/>
</dbReference>
<dbReference type="InterPro" id="IPR036034">
    <property type="entry name" value="PDZ_sf"/>
</dbReference>
<dbReference type="InterPro" id="IPR036028">
    <property type="entry name" value="SH3-like_dom_sf"/>
</dbReference>
<dbReference type="InterPro" id="IPR001452">
    <property type="entry name" value="SH3_domain"/>
</dbReference>
<dbReference type="InterPro" id="IPR050614">
    <property type="entry name" value="Synaptic_Scaffolding_LAP-MAGUK"/>
</dbReference>
<dbReference type="PANTHER" id="PTHR23119">
    <property type="entry name" value="DISCS LARGE"/>
    <property type="match status" value="1"/>
</dbReference>
<dbReference type="PANTHER" id="PTHR23119:SF33">
    <property type="entry name" value="DISKS LARGE HOMOLOG 4"/>
    <property type="match status" value="1"/>
</dbReference>
<dbReference type="Pfam" id="PF00625">
    <property type="entry name" value="Guanylate_kin"/>
    <property type="match status" value="1"/>
</dbReference>
<dbReference type="Pfam" id="PF10608">
    <property type="entry name" value="MAGUK_N_PEST"/>
    <property type="match status" value="1"/>
</dbReference>
<dbReference type="Pfam" id="PF00595">
    <property type="entry name" value="PDZ"/>
    <property type="match status" value="3"/>
</dbReference>
<dbReference type="Pfam" id="PF10600">
    <property type="entry name" value="PDZ_assoc"/>
    <property type="match status" value="1"/>
</dbReference>
<dbReference type="Pfam" id="PF00018">
    <property type="entry name" value="SH3_1"/>
    <property type="match status" value="1"/>
</dbReference>
<dbReference type="PIRSF" id="PIRSF001741">
    <property type="entry name" value="MAGUK_DLGH"/>
    <property type="match status" value="1"/>
</dbReference>
<dbReference type="SMART" id="SM00072">
    <property type="entry name" value="GuKc"/>
    <property type="match status" value="1"/>
</dbReference>
<dbReference type="SMART" id="SM01277">
    <property type="entry name" value="MAGUK_N_PEST"/>
    <property type="match status" value="1"/>
</dbReference>
<dbReference type="SMART" id="SM00228">
    <property type="entry name" value="PDZ"/>
    <property type="match status" value="3"/>
</dbReference>
<dbReference type="SMART" id="SM00326">
    <property type="entry name" value="SH3"/>
    <property type="match status" value="1"/>
</dbReference>
<dbReference type="SUPFAM" id="SSF52540">
    <property type="entry name" value="P-loop containing nucleoside triphosphate hydrolases"/>
    <property type="match status" value="1"/>
</dbReference>
<dbReference type="SUPFAM" id="SSF50156">
    <property type="entry name" value="PDZ domain-like"/>
    <property type="match status" value="3"/>
</dbReference>
<dbReference type="SUPFAM" id="SSF50044">
    <property type="entry name" value="SH3-domain"/>
    <property type="match status" value="1"/>
</dbReference>
<dbReference type="PROSITE" id="PS00856">
    <property type="entry name" value="GUANYLATE_KINASE_1"/>
    <property type="match status" value="1"/>
</dbReference>
<dbReference type="PROSITE" id="PS50052">
    <property type="entry name" value="GUANYLATE_KINASE_2"/>
    <property type="match status" value="1"/>
</dbReference>
<dbReference type="PROSITE" id="PS50106">
    <property type="entry name" value="PDZ"/>
    <property type="match status" value="3"/>
</dbReference>
<dbReference type="PROSITE" id="PS50002">
    <property type="entry name" value="SH3"/>
    <property type="match status" value="1"/>
</dbReference>
<organism>
    <name type="scientific">Homo sapiens</name>
    <name type="common">Human</name>
    <dbReference type="NCBI Taxonomy" id="9606"/>
    <lineage>
        <taxon>Eukaryota</taxon>
        <taxon>Metazoa</taxon>
        <taxon>Chordata</taxon>
        <taxon>Craniata</taxon>
        <taxon>Vertebrata</taxon>
        <taxon>Euteleostomi</taxon>
        <taxon>Mammalia</taxon>
        <taxon>Eutheria</taxon>
        <taxon>Euarchontoglires</taxon>
        <taxon>Primates</taxon>
        <taxon>Haplorrhini</taxon>
        <taxon>Catarrhini</taxon>
        <taxon>Hominidae</taxon>
        <taxon>Homo</taxon>
    </lineage>
</organism>
<accession>P78352</accession>
<accession>B7Z1S1</accession>
<accession>G5E939</accession>
<accession>Q92941</accession>
<accession>Q9UKK8</accession>